<reference key="1">
    <citation type="journal article" date="2004" name="Nat. Biotechnol.">
        <title>The genome sequence of the anaerobic, sulfate-reducing bacterium Desulfovibrio vulgaris Hildenborough.</title>
        <authorList>
            <person name="Heidelberg J.F."/>
            <person name="Seshadri R."/>
            <person name="Haveman S.A."/>
            <person name="Hemme C.L."/>
            <person name="Paulsen I.T."/>
            <person name="Kolonay J.F."/>
            <person name="Eisen J.A."/>
            <person name="Ward N.L."/>
            <person name="Methe B.A."/>
            <person name="Brinkac L.M."/>
            <person name="Daugherty S.C."/>
            <person name="DeBoy R.T."/>
            <person name="Dodson R.J."/>
            <person name="Durkin A.S."/>
            <person name="Madupu R."/>
            <person name="Nelson W.C."/>
            <person name="Sullivan S.A."/>
            <person name="Fouts D.E."/>
            <person name="Haft D.H."/>
            <person name="Selengut J."/>
            <person name="Peterson J.D."/>
            <person name="Davidsen T.M."/>
            <person name="Zafar N."/>
            <person name="Zhou L."/>
            <person name="Radune D."/>
            <person name="Dimitrov G."/>
            <person name="Hance M."/>
            <person name="Tran K."/>
            <person name="Khouri H.M."/>
            <person name="Gill J."/>
            <person name="Utterback T.R."/>
            <person name="Feldblyum T.V."/>
            <person name="Wall J.D."/>
            <person name="Voordouw G."/>
            <person name="Fraser C.M."/>
        </authorList>
    </citation>
    <scope>NUCLEOTIDE SEQUENCE [LARGE SCALE GENOMIC DNA]</scope>
    <source>
        <strain>ATCC 29579 / DSM 644 / CCUG 34227 / NCIMB 8303 / VKM B-1760 / Hildenborough</strain>
    </source>
</reference>
<comment type="function">
    <text evidence="1">Catalyzes the 2-thiolation of uridine at the wobble position (U34) of tRNA, leading to the formation of s(2)U34.</text>
</comment>
<comment type="catalytic activity">
    <reaction evidence="1">
        <text>S-sulfanyl-L-cysteinyl-[protein] + uridine(34) in tRNA + AH2 + ATP = 2-thiouridine(34) in tRNA + L-cysteinyl-[protein] + A + AMP + diphosphate + H(+)</text>
        <dbReference type="Rhea" id="RHEA:47032"/>
        <dbReference type="Rhea" id="RHEA-COMP:10131"/>
        <dbReference type="Rhea" id="RHEA-COMP:11726"/>
        <dbReference type="Rhea" id="RHEA-COMP:11727"/>
        <dbReference type="Rhea" id="RHEA-COMP:11728"/>
        <dbReference type="ChEBI" id="CHEBI:13193"/>
        <dbReference type="ChEBI" id="CHEBI:15378"/>
        <dbReference type="ChEBI" id="CHEBI:17499"/>
        <dbReference type="ChEBI" id="CHEBI:29950"/>
        <dbReference type="ChEBI" id="CHEBI:30616"/>
        <dbReference type="ChEBI" id="CHEBI:33019"/>
        <dbReference type="ChEBI" id="CHEBI:61963"/>
        <dbReference type="ChEBI" id="CHEBI:65315"/>
        <dbReference type="ChEBI" id="CHEBI:87170"/>
        <dbReference type="ChEBI" id="CHEBI:456215"/>
        <dbReference type="EC" id="2.8.1.13"/>
    </reaction>
</comment>
<comment type="subcellular location">
    <subcellularLocation>
        <location evidence="1">Cytoplasm</location>
    </subcellularLocation>
</comment>
<comment type="similarity">
    <text evidence="1">Belongs to the MnmA/TRMU family.</text>
</comment>
<name>MNMA_NITV2</name>
<accession>Q72DX2</accession>
<keyword id="KW-0067">ATP-binding</keyword>
<keyword id="KW-0963">Cytoplasm</keyword>
<keyword id="KW-1015">Disulfide bond</keyword>
<keyword id="KW-0547">Nucleotide-binding</keyword>
<keyword id="KW-1185">Reference proteome</keyword>
<keyword id="KW-0694">RNA-binding</keyword>
<keyword id="KW-0808">Transferase</keyword>
<keyword id="KW-0819">tRNA processing</keyword>
<keyword id="KW-0820">tRNA-binding</keyword>
<proteinExistence type="inferred from homology"/>
<dbReference type="EC" id="2.8.1.13" evidence="1"/>
<dbReference type="EMBL" id="AE017285">
    <property type="protein sequence ID" value="AAS95287.1"/>
    <property type="molecule type" value="Genomic_DNA"/>
</dbReference>
<dbReference type="RefSeq" id="WP_010938108.1">
    <property type="nucleotide sequence ID" value="NC_002937.3"/>
</dbReference>
<dbReference type="RefSeq" id="YP_010028.1">
    <property type="nucleotide sequence ID" value="NC_002937.3"/>
</dbReference>
<dbReference type="SMR" id="Q72DX2"/>
<dbReference type="STRING" id="882.DVU_0807"/>
<dbReference type="PaxDb" id="882-DVU_0807"/>
<dbReference type="EnsemblBacteria" id="AAS95287">
    <property type="protein sequence ID" value="AAS95287"/>
    <property type="gene ID" value="DVU_0807"/>
</dbReference>
<dbReference type="KEGG" id="dvu:DVU_0807"/>
<dbReference type="PATRIC" id="fig|882.5.peg.756"/>
<dbReference type="eggNOG" id="COG0482">
    <property type="taxonomic scope" value="Bacteria"/>
</dbReference>
<dbReference type="HOGENOM" id="CLU_035188_0_0_7"/>
<dbReference type="OrthoDB" id="9800696at2"/>
<dbReference type="PhylomeDB" id="Q72DX2"/>
<dbReference type="Proteomes" id="UP000002194">
    <property type="component" value="Chromosome"/>
</dbReference>
<dbReference type="GO" id="GO:0005737">
    <property type="term" value="C:cytoplasm"/>
    <property type="evidence" value="ECO:0007669"/>
    <property type="project" value="UniProtKB-SubCell"/>
</dbReference>
<dbReference type="GO" id="GO:0005524">
    <property type="term" value="F:ATP binding"/>
    <property type="evidence" value="ECO:0007669"/>
    <property type="project" value="UniProtKB-KW"/>
</dbReference>
<dbReference type="GO" id="GO:0000049">
    <property type="term" value="F:tRNA binding"/>
    <property type="evidence" value="ECO:0007669"/>
    <property type="project" value="UniProtKB-KW"/>
</dbReference>
<dbReference type="GO" id="GO:0103016">
    <property type="term" value="F:tRNA-uridine 2-sulfurtransferase activity"/>
    <property type="evidence" value="ECO:0007669"/>
    <property type="project" value="UniProtKB-EC"/>
</dbReference>
<dbReference type="GO" id="GO:0002143">
    <property type="term" value="P:tRNA wobble position uridine thiolation"/>
    <property type="evidence" value="ECO:0007669"/>
    <property type="project" value="TreeGrafter"/>
</dbReference>
<dbReference type="CDD" id="cd01998">
    <property type="entry name" value="MnmA_TRMU-like"/>
    <property type="match status" value="1"/>
</dbReference>
<dbReference type="FunFam" id="2.30.30.280:FF:000001">
    <property type="entry name" value="tRNA-specific 2-thiouridylase MnmA"/>
    <property type="match status" value="1"/>
</dbReference>
<dbReference type="Gene3D" id="2.30.30.280">
    <property type="entry name" value="Adenine nucleotide alpha hydrolases-like domains"/>
    <property type="match status" value="1"/>
</dbReference>
<dbReference type="Gene3D" id="3.40.50.620">
    <property type="entry name" value="HUPs"/>
    <property type="match status" value="1"/>
</dbReference>
<dbReference type="Gene3D" id="2.40.30.10">
    <property type="entry name" value="Translation factors"/>
    <property type="match status" value="1"/>
</dbReference>
<dbReference type="HAMAP" id="MF_00144">
    <property type="entry name" value="tRNA_thiouridyl_MnmA"/>
    <property type="match status" value="1"/>
</dbReference>
<dbReference type="InterPro" id="IPR004506">
    <property type="entry name" value="MnmA-like"/>
</dbReference>
<dbReference type="InterPro" id="IPR046885">
    <property type="entry name" value="MnmA-like_C"/>
</dbReference>
<dbReference type="InterPro" id="IPR046884">
    <property type="entry name" value="MnmA-like_central"/>
</dbReference>
<dbReference type="InterPro" id="IPR023382">
    <property type="entry name" value="MnmA-like_central_sf"/>
</dbReference>
<dbReference type="InterPro" id="IPR014729">
    <property type="entry name" value="Rossmann-like_a/b/a_fold"/>
</dbReference>
<dbReference type="NCBIfam" id="NF001138">
    <property type="entry name" value="PRK00143.1"/>
    <property type="match status" value="1"/>
</dbReference>
<dbReference type="NCBIfam" id="TIGR00420">
    <property type="entry name" value="trmU"/>
    <property type="match status" value="1"/>
</dbReference>
<dbReference type="PANTHER" id="PTHR11933:SF5">
    <property type="entry name" value="MITOCHONDRIAL TRNA-SPECIFIC 2-THIOURIDYLASE 1"/>
    <property type="match status" value="1"/>
</dbReference>
<dbReference type="PANTHER" id="PTHR11933">
    <property type="entry name" value="TRNA 5-METHYLAMINOMETHYL-2-THIOURIDYLATE -METHYLTRANSFERASE"/>
    <property type="match status" value="1"/>
</dbReference>
<dbReference type="Pfam" id="PF03054">
    <property type="entry name" value="tRNA_Me_trans"/>
    <property type="match status" value="1"/>
</dbReference>
<dbReference type="Pfam" id="PF20258">
    <property type="entry name" value="tRNA_Me_trans_C"/>
    <property type="match status" value="1"/>
</dbReference>
<dbReference type="Pfam" id="PF20259">
    <property type="entry name" value="tRNA_Me_trans_M"/>
    <property type="match status" value="1"/>
</dbReference>
<dbReference type="SUPFAM" id="SSF52402">
    <property type="entry name" value="Adenine nucleotide alpha hydrolases-like"/>
    <property type="match status" value="1"/>
</dbReference>
<sequence>MTIAVAMSGGTDSLFALVLLKEQGQQVCGLHARFIPPTGHDPVPDIRAMCDRLGVDLHVVDLTEAFEEHVVRPFMEDYMVGRTPNPCARCNATMKFGLLADAAAHVGAVHLATGHYARLLRHPRWGTVLQRGVDPAKDQSYFLSLVPHARLEKAVFPLGNWRKEAVRGELARRSIVPPLPSESQEICFVPDDDYRAFLKDRRVRLPGPGPIVTTRGRKIGSHAGLWQYTEGQRKGLGIAWHEPLYVVGKDMENNMLLVGGREALASPGCVAEEVNLLVPYEDWPAEVAVRIRYRQQPLSARVTLRDGRLYARFREPQPPAARGQVLAVYDMEHHVLGGGVILGPLP</sequence>
<gene>
    <name evidence="1" type="primary">mnmA</name>
    <name type="ordered locus">DVU_0807</name>
</gene>
<evidence type="ECO:0000255" key="1">
    <source>
        <dbReference type="HAMAP-Rule" id="MF_00144"/>
    </source>
</evidence>
<organism>
    <name type="scientific">Nitratidesulfovibrio vulgaris (strain ATCC 29579 / DSM 644 / CCUG 34227 / NCIMB 8303 / VKM B-1760 / Hildenborough)</name>
    <name type="common">Desulfovibrio vulgaris</name>
    <dbReference type="NCBI Taxonomy" id="882"/>
    <lineage>
        <taxon>Bacteria</taxon>
        <taxon>Pseudomonadati</taxon>
        <taxon>Thermodesulfobacteriota</taxon>
        <taxon>Desulfovibrionia</taxon>
        <taxon>Desulfovibrionales</taxon>
        <taxon>Desulfovibrionaceae</taxon>
        <taxon>Nitratidesulfovibrio</taxon>
    </lineage>
</organism>
<feature type="chain" id="PRO_0000349616" description="tRNA-specific 2-thiouridylase MnmA">
    <location>
        <begin position="1"/>
        <end position="346"/>
    </location>
</feature>
<feature type="region of interest" description="Interaction with tRNA" evidence="1">
    <location>
        <begin position="137"/>
        <end position="139"/>
    </location>
</feature>
<feature type="region of interest" description="Interaction with tRNA" evidence="1">
    <location>
        <begin position="292"/>
        <end position="293"/>
    </location>
</feature>
<feature type="active site" description="Nucleophile" evidence="1">
    <location>
        <position position="90"/>
    </location>
</feature>
<feature type="active site" description="Cysteine persulfide intermediate" evidence="1">
    <location>
        <position position="187"/>
    </location>
</feature>
<feature type="binding site" evidence="1">
    <location>
        <begin position="6"/>
        <end position="13"/>
    </location>
    <ligand>
        <name>ATP</name>
        <dbReference type="ChEBI" id="CHEBI:30616"/>
    </ligand>
</feature>
<feature type="binding site" evidence="1">
    <location>
        <position position="114"/>
    </location>
    <ligand>
        <name>ATP</name>
        <dbReference type="ChEBI" id="CHEBI:30616"/>
    </ligand>
</feature>
<feature type="site" description="Interaction with tRNA" evidence="1">
    <location>
        <position position="115"/>
    </location>
</feature>
<feature type="site" description="Interaction with tRNA" evidence="1">
    <location>
        <position position="324"/>
    </location>
</feature>
<feature type="disulfide bond" description="Alternate" evidence="1">
    <location>
        <begin position="90"/>
        <end position="187"/>
    </location>
</feature>
<protein>
    <recommendedName>
        <fullName evidence="1">tRNA-specific 2-thiouridylase MnmA</fullName>
        <ecNumber evidence="1">2.8.1.13</ecNumber>
    </recommendedName>
</protein>